<dbReference type="EC" id="2.7.13.3" evidence="1"/>
<dbReference type="EMBL" id="CP000825">
    <property type="protein sequence ID" value="ABV50828.1"/>
    <property type="molecule type" value="Genomic_DNA"/>
</dbReference>
<dbReference type="RefSeq" id="WP_012007902.1">
    <property type="nucleotide sequence ID" value="NC_009840.1"/>
</dbReference>
<dbReference type="SMR" id="A8G5E7"/>
<dbReference type="STRING" id="93060.P9215_12131"/>
<dbReference type="KEGG" id="pmh:P9215_12131"/>
<dbReference type="eggNOG" id="COG2205">
    <property type="taxonomic scope" value="Bacteria"/>
</dbReference>
<dbReference type="HOGENOM" id="CLU_723030_0_0_3"/>
<dbReference type="OrthoDB" id="9773956at2"/>
<dbReference type="Proteomes" id="UP000002014">
    <property type="component" value="Chromosome"/>
</dbReference>
<dbReference type="GO" id="GO:0005524">
    <property type="term" value="F:ATP binding"/>
    <property type="evidence" value="ECO:0007669"/>
    <property type="project" value="UniProtKB-KW"/>
</dbReference>
<dbReference type="GO" id="GO:0000156">
    <property type="term" value="F:phosphorelay response regulator activity"/>
    <property type="evidence" value="ECO:0007669"/>
    <property type="project" value="TreeGrafter"/>
</dbReference>
<dbReference type="GO" id="GO:0000155">
    <property type="term" value="F:phosphorelay sensor kinase activity"/>
    <property type="evidence" value="ECO:0007669"/>
    <property type="project" value="InterPro"/>
</dbReference>
<dbReference type="GO" id="GO:0030295">
    <property type="term" value="F:protein kinase activator activity"/>
    <property type="evidence" value="ECO:0007669"/>
    <property type="project" value="TreeGrafter"/>
</dbReference>
<dbReference type="GO" id="GO:0007623">
    <property type="term" value="P:circadian rhythm"/>
    <property type="evidence" value="ECO:0007669"/>
    <property type="project" value="UniProtKB-UniRule"/>
</dbReference>
<dbReference type="GO" id="GO:0007234">
    <property type="term" value="P:osmosensory signaling via phosphorelay pathway"/>
    <property type="evidence" value="ECO:0007669"/>
    <property type="project" value="TreeGrafter"/>
</dbReference>
<dbReference type="CDD" id="cd00075">
    <property type="entry name" value="HATPase"/>
    <property type="match status" value="1"/>
</dbReference>
<dbReference type="CDD" id="cd00082">
    <property type="entry name" value="HisKA"/>
    <property type="match status" value="1"/>
</dbReference>
<dbReference type="FunFam" id="3.30.565.10:FF:000006">
    <property type="entry name" value="Sensor histidine kinase WalK"/>
    <property type="match status" value="1"/>
</dbReference>
<dbReference type="Gene3D" id="1.10.287.130">
    <property type="match status" value="1"/>
</dbReference>
<dbReference type="Gene3D" id="3.40.30.10">
    <property type="entry name" value="Glutaredoxin"/>
    <property type="match status" value="1"/>
</dbReference>
<dbReference type="Gene3D" id="3.30.565.10">
    <property type="entry name" value="Histidine kinase-like ATPase, C-terminal domain"/>
    <property type="match status" value="1"/>
</dbReference>
<dbReference type="HAMAP" id="MF_01837">
    <property type="entry name" value="Kinase_SasA"/>
    <property type="match status" value="1"/>
</dbReference>
<dbReference type="InterPro" id="IPR036890">
    <property type="entry name" value="HATPase_C_sf"/>
</dbReference>
<dbReference type="InterPro" id="IPR005467">
    <property type="entry name" value="His_kinase_dom"/>
</dbReference>
<dbReference type="InterPro" id="IPR003661">
    <property type="entry name" value="HisK_dim/P_dom"/>
</dbReference>
<dbReference type="InterPro" id="IPR036097">
    <property type="entry name" value="HisK_dim/P_sf"/>
</dbReference>
<dbReference type="InterPro" id="IPR011649">
    <property type="entry name" value="KaiB_domain"/>
</dbReference>
<dbReference type="InterPro" id="IPR023527">
    <property type="entry name" value="Kinase_SasA"/>
</dbReference>
<dbReference type="InterPro" id="IPR052545">
    <property type="entry name" value="Light-responsive_reg"/>
</dbReference>
<dbReference type="InterPro" id="IPR004358">
    <property type="entry name" value="Sig_transdc_His_kin-like_C"/>
</dbReference>
<dbReference type="InterPro" id="IPR036249">
    <property type="entry name" value="Thioredoxin-like_sf"/>
</dbReference>
<dbReference type="NCBIfam" id="NF006800">
    <property type="entry name" value="PRK09303.1"/>
    <property type="match status" value="1"/>
</dbReference>
<dbReference type="PANTHER" id="PTHR42878:SF7">
    <property type="entry name" value="SENSOR HISTIDINE KINASE GLRK"/>
    <property type="match status" value="1"/>
</dbReference>
<dbReference type="PANTHER" id="PTHR42878">
    <property type="entry name" value="TWO-COMPONENT HISTIDINE KINASE"/>
    <property type="match status" value="1"/>
</dbReference>
<dbReference type="Pfam" id="PF02518">
    <property type="entry name" value="HATPase_c"/>
    <property type="match status" value="1"/>
</dbReference>
<dbReference type="Pfam" id="PF00512">
    <property type="entry name" value="HisKA"/>
    <property type="match status" value="1"/>
</dbReference>
<dbReference type="Pfam" id="PF07689">
    <property type="entry name" value="KaiB"/>
    <property type="match status" value="1"/>
</dbReference>
<dbReference type="PRINTS" id="PR00344">
    <property type="entry name" value="BCTRLSENSOR"/>
</dbReference>
<dbReference type="SMART" id="SM00387">
    <property type="entry name" value="HATPase_c"/>
    <property type="match status" value="1"/>
</dbReference>
<dbReference type="SMART" id="SM00388">
    <property type="entry name" value="HisKA"/>
    <property type="match status" value="1"/>
</dbReference>
<dbReference type="SMART" id="SM01248">
    <property type="entry name" value="KaiB"/>
    <property type="match status" value="1"/>
</dbReference>
<dbReference type="SUPFAM" id="SSF55874">
    <property type="entry name" value="ATPase domain of HSP90 chaperone/DNA topoisomerase II/histidine kinase"/>
    <property type="match status" value="1"/>
</dbReference>
<dbReference type="SUPFAM" id="SSF47384">
    <property type="entry name" value="Homodimeric domain of signal transducing histidine kinase"/>
    <property type="match status" value="1"/>
</dbReference>
<dbReference type="SUPFAM" id="SSF52833">
    <property type="entry name" value="Thioredoxin-like"/>
    <property type="match status" value="1"/>
</dbReference>
<dbReference type="PROSITE" id="PS50109">
    <property type="entry name" value="HIS_KIN"/>
    <property type="match status" value="1"/>
</dbReference>
<proteinExistence type="inferred from homology"/>
<protein>
    <recommendedName>
        <fullName evidence="1">Adaptive-response sensory kinase SasA</fullName>
        <ecNumber evidence="1">2.7.13.3</ecNumber>
    </recommendedName>
    <alternativeName>
        <fullName evidence="1">Sensor histidine kinase SasA</fullName>
    </alternativeName>
</protein>
<name>SASA_PROM2</name>
<feature type="chain" id="PRO_1000088442" description="Adaptive-response sensory kinase SasA">
    <location>
        <begin position="1"/>
        <end position="372"/>
    </location>
</feature>
<feature type="domain" description="Histidine kinase" evidence="1">
    <location>
        <begin position="147"/>
        <end position="360"/>
    </location>
</feature>
<feature type="modified residue" description="Phosphohistidine; by autocatalysis" evidence="1">
    <location>
        <position position="150"/>
    </location>
</feature>
<gene>
    <name evidence="1" type="primary">sasA</name>
    <name type="ordered locus">P9215_12131</name>
</gene>
<reference key="1">
    <citation type="journal article" date="2007" name="PLoS Genet.">
        <title>Patterns and implications of gene gain and loss in the evolution of Prochlorococcus.</title>
        <authorList>
            <person name="Kettler G.C."/>
            <person name="Martiny A.C."/>
            <person name="Huang K."/>
            <person name="Zucker J."/>
            <person name="Coleman M.L."/>
            <person name="Rodrigue S."/>
            <person name="Chen F."/>
            <person name="Lapidus A."/>
            <person name="Ferriera S."/>
            <person name="Johnson J."/>
            <person name="Steglich C."/>
            <person name="Church G.M."/>
            <person name="Richardson P."/>
            <person name="Chisholm S.W."/>
        </authorList>
    </citation>
    <scope>NUCLEOTIDE SEQUENCE [LARGE SCALE GENOMIC DNA]</scope>
    <source>
        <strain>MIT 9215</strain>
    </source>
</reference>
<sequence length="372" mass="42455">MNDKKELKLILVAARNQLSSGDIKSLIAYLESNDCEFEISLQISEPTEQPELLELHRLVAIPALIKISPAPKQIFAGSNIFSQFQKWLPRWTQEGLTKNLGINLQPSKIDSIRTQKEFLLEDELLVLRQENETLTKRIESQERLLRMVAHELRTPLTAATLAIQSQKLGQIDISKLQEVIKRRLEEIELLSQDLLEVGTTKWEALFNPQKIDLGNISAEVILELEKFWRLRNIEIDTDIPSDLPSVFADQRRMRQVLLNLIENAIKFSEDSGSIKITMIHKTNQWVEITICDKGAGIPLSEQKRIFLDRVRLPQTSEGTSGFGIGLSVCRRIVQVHGGRIWVVSELSEGSCFHFTVPVWQGQNKEQQYLTKG</sequence>
<comment type="function">
    <text evidence="1">Member of the two-component regulatory system SasA/RpaA involved in genome-wide circadian gene expression. One of several clock output pathways. Participates in the Kai clock protein complex, the main circadian regulator in cyanobacteria, via its interaction with KaiC. KaiC enhances the autophosphorylation activity of SasA, which then transfers its phosphate group to RpaA to activate it. In addition to its output function, recruits fold-shifted KaiB (KaiB(fs)) to KaiC to cooperatively form the KaiB(6):KaiC(6) complex (independent of SasA kinase activity). Required for robustness of the circadian rhythm of gene expression and is involved in clock output, also required for adaptation to light/dark cycles.</text>
</comment>
<comment type="catalytic activity">
    <reaction evidence="1">
        <text>ATP + protein L-histidine = ADP + protein N-phospho-L-histidine.</text>
        <dbReference type="EC" id="2.7.13.3"/>
    </reaction>
</comment>
<comment type="subunit">
    <text evidence="1">Homooligomerizes. Interacts with KaiC. Participates in the KaiBC complex, whose core is composed of a KaiC homohexamer and 6 KaiB.</text>
</comment>
<comment type="domain">
    <text evidence="1">The N-terminus interacts with KaiC, while the C-terminal histidine kinase domain autophosphorylates and is probably responsible for self-oligomerization. The N-terminal domain stimulates the C-terminus to autophosphorylate.</text>
</comment>
<keyword id="KW-0067">ATP-binding</keyword>
<keyword id="KW-0090">Biological rhythms</keyword>
<keyword id="KW-0418">Kinase</keyword>
<keyword id="KW-0547">Nucleotide-binding</keyword>
<keyword id="KW-0597">Phosphoprotein</keyword>
<keyword id="KW-0808">Transferase</keyword>
<keyword id="KW-0902">Two-component regulatory system</keyword>
<evidence type="ECO:0000255" key="1">
    <source>
        <dbReference type="HAMAP-Rule" id="MF_01837"/>
    </source>
</evidence>
<accession>A8G5E7</accession>
<organism>
    <name type="scientific">Prochlorococcus marinus (strain MIT 9215)</name>
    <dbReference type="NCBI Taxonomy" id="93060"/>
    <lineage>
        <taxon>Bacteria</taxon>
        <taxon>Bacillati</taxon>
        <taxon>Cyanobacteriota</taxon>
        <taxon>Cyanophyceae</taxon>
        <taxon>Synechococcales</taxon>
        <taxon>Prochlorococcaceae</taxon>
        <taxon>Prochlorococcus</taxon>
    </lineage>
</organism>